<proteinExistence type="evidence at protein level"/>
<feature type="transit peptide" description="Chloroplast" evidence="5">
    <location>
        <begin position="1"/>
        <end position="30"/>
    </location>
</feature>
<feature type="chain" id="PRO_0000003670" description="Chlorophyll a-b binding protein 1, chloroplastic">
    <location>
        <begin position="31"/>
        <end position="262"/>
    </location>
</feature>
<feature type="transmembrane region" description="Helical" evidence="4">
    <location>
        <begin position="96"/>
        <end position="116"/>
    </location>
</feature>
<feature type="transmembrane region" description="Helical" evidence="4">
    <location>
        <begin position="148"/>
        <end position="168"/>
    </location>
</feature>
<feature type="transmembrane region" description="Helical" evidence="4">
    <location>
        <begin position="216"/>
        <end position="236"/>
    </location>
</feature>
<feature type="binding site" description="axial binding residue" evidence="3">
    <location>
        <position position="54"/>
    </location>
    <ligand>
        <name>chlorophyll b</name>
        <dbReference type="ChEBI" id="CHEBI:61721"/>
        <label>1</label>
    </ligand>
    <ligandPart>
        <name>Mg</name>
        <dbReference type="ChEBI" id="CHEBI:25107"/>
    </ligandPart>
</feature>
<feature type="binding site" evidence="1">
    <location>
        <position position="76"/>
    </location>
    <ligand>
        <name>chlorophyll a</name>
        <dbReference type="ChEBI" id="CHEBI:58416"/>
        <label>1</label>
    </ligand>
</feature>
<feature type="binding site" evidence="1">
    <location>
        <position position="82"/>
    </location>
    <ligand>
        <name>chlorophyll a</name>
        <dbReference type="ChEBI" id="CHEBI:58416"/>
        <label>1</label>
    </ligand>
</feature>
<feature type="binding site" description="axial binding residue" evidence="3">
    <location>
        <position position="95"/>
    </location>
    <ligand>
        <name>chlorophyll a</name>
        <dbReference type="ChEBI" id="CHEBI:58416"/>
        <label>1</label>
    </ligand>
    <ligandPart>
        <name>Mg</name>
        <dbReference type="ChEBI" id="CHEBI:25107"/>
    </ligandPart>
</feature>
<feature type="binding site" description="axial binding residue" evidence="3">
    <location>
        <position position="98"/>
    </location>
    <ligand>
        <name>chlorophyll a</name>
        <dbReference type="ChEBI" id="CHEBI:58416"/>
        <label>2</label>
    </ligand>
    <ligandPart>
        <name>Mg</name>
        <dbReference type="ChEBI" id="CHEBI:25107"/>
    </ligandPart>
</feature>
<feature type="binding site" evidence="1">
    <location>
        <position position="100"/>
    </location>
    <ligand>
        <name>chlorophyll b</name>
        <dbReference type="ChEBI" id="CHEBI:61721"/>
        <label>2</label>
    </ligand>
</feature>
<feature type="binding site" evidence="1">
    <location>
        <position position="133"/>
    </location>
    <ligand>
        <name>chlorophyll a</name>
        <dbReference type="ChEBI" id="CHEBI:58416"/>
        <label>3</label>
    </ligand>
</feature>
<feature type="binding site" evidence="1">
    <location>
        <position position="143"/>
    </location>
    <ligand>
        <name>chlorophyll a</name>
        <dbReference type="ChEBI" id="CHEBI:58416"/>
        <label>3</label>
    </ligand>
</feature>
<feature type="binding site" description="axial binding residue" evidence="1">
    <location>
        <position position="149"/>
    </location>
    <ligand>
        <name>chlorophyll b</name>
        <dbReference type="ChEBI" id="CHEBI:61721"/>
        <label>2</label>
    </ligand>
    <ligandPart>
        <name>Mg</name>
        <dbReference type="ChEBI" id="CHEBI:25107"/>
    </ligandPart>
</feature>
<feature type="binding site" evidence="1">
    <location>
        <position position="153"/>
    </location>
    <ligand>
        <name>chlorophyll b</name>
        <dbReference type="ChEBI" id="CHEBI:61721"/>
        <label>3</label>
    </ligand>
</feature>
<feature type="binding site" evidence="1">
    <location>
        <position position="161"/>
    </location>
    <ligand>
        <name>chlorophyll b</name>
        <dbReference type="ChEBI" id="CHEBI:61721"/>
        <label>4</label>
    </ligand>
</feature>
<feature type="binding site" evidence="2">
    <location>
        <position position="161"/>
    </location>
    <ligand>
        <name>chlorophyll b</name>
        <dbReference type="ChEBI" id="CHEBI:61721"/>
        <label>5</label>
    </ligand>
</feature>
<feature type="binding site" description="axial binding residue" evidence="3">
    <location>
        <position position="169"/>
    </location>
    <ligand>
        <name>chlorophyll b</name>
        <dbReference type="ChEBI" id="CHEBI:61721"/>
        <label>3</label>
    </ligand>
    <ligandPart>
        <name>Mg</name>
        <dbReference type="ChEBI" id="CHEBI:25107"/>
    </ligandPart>
</feature>
<feature type="binding site" evidence="1">
    <location>
        <position position="172"/>
    </location>
    <ligand>
        <name>chlorophyll b</name>
        <dbReference type="ChEBI" id="CHEBI:61721"/>
        <label>4</label>
    </ligand>
</feature>
<feature type="binding site" evidence="1">
    <location>
        <position position="178"/>
    </location>
    <ligand>
        <name>chlorophyll b</name>
        <dbReference type="ChEBI" id="CHEBI:61721"/>
        <label>2</label>
    </ligand>
</feature>
<feature type="binding site" evidence="1">
    <location>
        <position position="209"/>
    </location>
    <ligand>
        <name>chlorophyll a</name>
        <dbReference type="ChEBI" id="CHEBI:58416"/>
        <label>5</label>
    </ligand>
</feature>
<feature type="binding site" description="axial binding residue" evidence="3">
    <location>
        <position position="210"/>
    </location>
    <ligand>
        <name>chlorophyll a</name>
        <dbReference type="ChEBI" id="CHEBI:58416"/>
        <label>3</label>
    </ligand>
    <ligandPart>
        <name>Mg</name>
        <dbReference type="ChEBI" id="CHEBI:25107"/>
    </ligandPart>
</feature>
<feature type="binding site" description="axial binding residue" evidence="3">
    <location>
        <position position="213"/>
    </location>
    <ligand>
        <name>chlorophyll a</name>
        <dbReference type="ChEBI" id="CHEBI:58416"/>
        <label>4</label>
    </ligand>
    <ligandPart>
        <name>Mg</name>
        <dbReference type="ChEBI" id="CHEBI:25107"/>
    </ligandPart>
</feature>
<feature type="binding site" evidence="1">
    <location>
        <position position="215"/>
    </location>
    <ligand>
        <name>chlorophyll a</name>
        <dbReference type="ChEBI" id="CHEBI:58416"/>
        <label>1</label>
    </ligand>
</feature>
<feature type="binding site" description="axial binding residue" evidence="3">
    <location>
        <position position="227"/>
    </location>
    <ligand>
        <name>chlorophyll a</name>
        <dbReference type="ChEBI" id="CHEBI:58416"/>
        <label>5</label>
    </ligand>
    <ligandPart>
        <name>Mg</name>
        <dbReference type="ChEBI" id="CHEBI:25107"/>
    </ligandPart>
</feature>
<feature type="binding site" description="axial binding residue" evidence="3">
    <location>
        <position position="242"/>
    </location>
    <ligand>
        <name>chlorophyll a</name>
        <dbReference type="ChEBI" id="CHEBI:58416"/>
        <label>6</label>
    </ligand>
    <ligandPart>
        <name>Mg</name>
        <dbReference type="ChEBI" id="CHEBI:25107"/>
    </ligandPart>
</feature>
<feature type="binding site" evidence="1">
    <location>
        <position position="251"/>
    </location>
    <ligand>
        <name>chlorophyll a</name>
        <dbReference type="ChEBI" id="CHEBI:58416"/>
        <label>6</label>
    </ligand>
</feature>
<feature type="binding site" evidence="1">
    <location>
        <position position="258"/>
    </location>
    <ligand>
        <name>chlorophyll b</name>
        <dbReference type="ChEBI" id="CHEBI:61721"/>
        <label>5</label>
    </ligand>
</feature>
<feature type="modified residue" description="N2-acetylarginine" evidence="1">
    <location>
        <position position="31"/>
    </location>
</feature>
<feature type="modified residue" description="Phosphothreonine" evidence="1">
    <location>
        <position position="33"/>
    </location>
</feature>
<feature type="strand" evidence="6">
    <location>
        <begin position="46"/>
        <end position="48"/>
    </location>
</feature>
<feature type="helix" evidence="6">
    <location>
        <begin position="56"/>
        <end position="58"/>
    </location>
</feature>
<feature type="helix" evidence="6">
    <location>
        <begin position="85"/>
        <end position="117"/>
    </location>
</feature>
<feature type="helix" evidence="6">
    <location>
        <begin position="127"/>
        <end position="129"/>
    </location>
</feature>
<feature type="helix" evidence="6">
    <location>
        <begin position="132"/>
        <end position="135"/>
    </location>
</feature>
<feature type="strand" evidence="6">
    <location>
        <begin position="136"/>
        <end position="138"/>
    </location>
</feature>
<feature type="helix" evidence="6">
    <location>
        <begin position="154"/>
        <end position="174"/>
    </location>
</feature>
<feature type="strand" evidence="6">
    <location>
        <begin position="182"/>
        <end position="185"/>
    </location>
</feature>
<feature type="helix" evidence="6">
    <location>
        <begin position="189"/>
        <end position="191"/>
    </location>
</feature>
<feature type="helix" evidence="6">
    <location>
        <begin position="200"/>
        <end position="231"/>
    </location>
</feature>
<feature type="helix" evidence="6">
    <location>
        <begin position="235"/>
        <end position="244"/>
    </location>
</feature>
<feature type="strand" evidence="6">
    <location>
        <begin position="246"/>
        <end position="250"/>
    </location>
</feature>
<feature type="helix" evidence="6">
    <location>
        <begin position="251"/>
        <end position="254"/>
    </location>
</feature>
<gene>
    <name type="primary">CAB1</name>
</gene>
<keyword id="KW-0002">3D-structure</keyword>
<keyword id="KW-0007">Acetylation</keyword>
<keyword id="KW-0148">Chlorophyll</keyword>
<keyword id="KW-0150">Chloroplast</keyword>
<keyword id="KW-0157">Chromophore</keyword>
<keyword id="KW-0460">Magnesium</keyword>
<keyword id="KW-0472">Membrane</keyword>
<keyword id="KW-0479">Metal-binding</keyword>
<keyword id="KW-0597">Phosphoprotein</keyword>
<keyword id="KW-0602">Photosynthesis</keyword>
<keyword id="KW-0603">Photosystem I</keyword>
<keyword id="KW-0604">Photosystem II</keyword>
<keyword id="KW-0934">Plastid</keyword>
<keyword id="KW-1185">Reference proteome</keyword>
<keyword id="KW-0793">Thylakoid</keyword>
<keyword id="KW-0809">Transit peptide</keyword>
<keyword id="KW-0812">Transmembrane</keyword>
<keyword id="KW-1133">Transmembrane helix</keyword>
<organism>
    <name type="scientific">Zea mays</name>
    <name type="common">Maize</name>
    <dbReference type="NCBI Taxonomy" id="4577"/>
    <lineage>
        <taxon>Eukaryota</taxon>
        <taxon>Viridiplantae</taxon>
        <taxon>Streptophyta</taxon>
        <taxon>Embryophyta</taxon>
        <taxon>Tracheophyta</taxon>
        <taxon>Spermatophyta</taxon>
        <taxon>Magnoliopsida</taxon>
        <taxon>Liliopsida</taxon>
        <taxon>Poales</taxon>
        <taxon>Poaceae</taxon>
        <taxon>PACMAD clade</taxon>
        <taxon>Panicoideae</taxon>
        <taxon>Andropogonodae</taxon>
        <taxon>Andropogoneae</taxon>
        <taxon>Tripsacinae</taxon>
        <taxon>Zea</taxon>
    </lineage>
</organism>
<reference key="1">
    <citation type="journal article" date="1989" name="Mol. Gen. Genet.">
        <title>Isolation and characterization of a maize chlorophyll a/b binding protein gene that produces high levels of mRNA in the dark.</title>
        <authorList>
            <person name="Sullivan T.D."/>
            <person name="Christensen A.H."/>
            <person name="Quail P.H."/>
        </authorList>
    </citation>
    <scope>NUCLEOTIDE SEQUENCE [GENOMIC DNA]</scope>
    <source>
        <strain>cv. B37</strain>
    </source>
</reference>
<comment type="function">
    <text>The light-harvesting complex (LHC) functions as a light receptor, it captures and delivers excitation energy to photosystems with which it is closely associated.</text>
</comment>
<comment type="cofactor">
    <text evidence="1">Binds at least 14 chlorophylls (8 Chl-a and 6 Chl-b) and carotenoids such as lutein and neoxanthin.</text>
</comment>
<comment type="subunit">
    <text>The LHC complex consists of chlorophyll a-b binding proteins.</text>
</comment>
<comment type="subcellular location">
    <subcellularLocation>
        <location>Plastid</location>
        <location>Chloroplast thylakoid membrane</location>
        <topology>Multi-pass membrane protein</topology>
    </subcellularLocation>
</comment>
<comment type="domain">
    <text>The N-terminus of the protein extends into the stroma where it is involved with adhesion of granal membranes and post-translational modifications; both are believed to mediate the distribution of excitation energy between photosystems I and II.</text>
</comment>
<comment type="PTM">
    <text evidence="1">Photoregulated by reversible phosphorylation of its threonine residues.</text>
</comment>
<comment type="similarity">
    <text evidence="5">Belongs to the light-harvesting chlorophyll a/b-binding (LHC) protein family.</text>
</comment>
<dbReference type="EMBL" id="X14794">
    <property type="protein sequence ID" value="CAA32900.1"/>
    <property type="molecule type" value="Genomic_DNA"/>
</dbReference>
<dbReference type="PIR" id="S04453">
    <property type="entry name" value="S04453"/>
</dbReference>
<dbReference type="RefSeq" id="NP_001147639.1">
    <property type="nucleotide sequence ID" value="NM_001154167.1"/>
</dbReference>
<dbReference type="PDB" id="5ZJI">
    <property type="method" value="EM"/>
    <property type="resolution" value="3.30 A"/>
    <property type="chains" value="X/Z=31-262"/>
</dbReference>
<dbReference type="PDBsum" id="5ZJI"/>
<dbReference type="EMDB" id="EMD-6932"/>
<dbReference type="SMR" id="P12329"/>
<dbReference type="IntAct" id="P12329">
    <property type="interactions" value="1"/>
</dbReference>
<dbReference type="STRING" id="4577.P12329"/>
<dbReference type="PaxDb" id="4577-AC207722.2_FGP009"/>
<dbReference type="GeneID" id="100281248"/>
<dbReference type="KEGG" id="zma:100281248"/>
<dbReference type="MaizeGDB" id="61648"/>
<dbReference type="eggNOG" id="ENOG502QPU1">
    <property type="taxonomic scope" value="Eukaryota"/>
</dbReference>
<dbReference type="HOGENOM" id="CLU_057943_2_0_1"/>
<dbReference type="InParanoid" id="P12329"/>
<dbReference type="OMA" id="WFKAAIW"/>
<dbReference type="OrthoDB" id="423598at2759"/>
<dbReference type="Proteomes" id="UP000007305">
    <property type="component" value="Unplaced"/>
</dbReference>
<dbReference type="ExpressionAtlas" id="P12329">
    <property type="expression patterns" value="differential"/>
</dbReference>
<dbReference type="GO" id="GO:0009535">
    <property type="term" value="C:chloroplast thylakoid membrane"/>
    <property type="evidence" value="ECO:0000318"/>
    <property type="project" value="GO_Central"/>
</dbReference>
<dbReference type="GO" id="GO:0009522">
    <property type="term" value="C:photosystem I"/>
    <property type="evidence" value="ECO:0007669"/>
    <property type="project" value="UniProtKB-KW"/>
</dbReference>
<dbReference type="GO" id="GO:0009523">
    <property type="term" value="C:photosystem II"/>
    <property type="evidence" value="ECO:0007669"/>
    <property type="project" value="UniProtKB-KW"/>
</dbReference>
<dbReference type="GO" id="GO:0016168">
    <property type="term" value="F:chlorophyll binding"/>
    <property type="evidence" value="ECO:0007669"/>
    <property type="project" value="UniProtKB-KW"/>
</dbReference>
<dbReference type="GO" id="GO:0046872">
    <property type="term" value="F:metal ion binding"/>
    <property type="evidence" value="ECO:0007669"/>
    <property type="project" value="UniProtKB-KW"/>
</dbReference>
<dbReference type="GO" id="GO:0009768">
    <property type="term" value="P:photosynthesis, light harvesting in photosystem I"/>
    <property type="evidence" value="ECO:0000318"/>
    <property type="project" value="GO_Central"/>
</dbReference>
<dbReference type="GO" id="GO:0009416">
    <property type="term" value="P:response to light stimulus"/>
    <property type="evidence" value="ECO:0000318"/>
    <property type="project" value="GO_Central"/>
</dbReference>
<dbReference type="FunFam" id="1.10.3460.10:FF:000001">
    <property type="entry name" value="Chlorophyll a-b binding protein, chloroplastic"/>
    <property type="match status" value="1"/>
</dbReference>
<dbReference type="Gene3D" id="1.10.3460.10">
    <property type="entry name" value="Chlorophyll a/b binding protein domain"/>
    <property type="match status" value="1"/>
</dbReference>
<dbReference type="InterPro" id="IPR001344">
    <property type="entry name" value="Chloro_AB-bd_pln"/>
</dbReference>
<dbReference type="InterPro" id="IPR022796">
    <property type="entry name" value="Chloroa_b-bind"/>
</dbReference>
<dbReference type="PANTHER" id="PTHR21649">
    <property type="entry name" value="CHLOROPHYLL A/B BINDING PROTEIN"/>
    <property type="match status" value="1"/>
</dbReference>
<dbReference type="Pfam" id="PF00504">
    <property type="entry name" value="Chloroa_b-bind"/>
    <property type="match status" value="1"/>
</dbReference>
<dbReference type="SUPFAM" id="SSF103511">
    <property type="entry name" value="Chlorophyll a-b binding protein"/>
    <property type="match status" value="1"/>
</dbReference>
<evidence type="ECO:0000250" key="1"/>
<evidence type="ECO:0000250" key="2">
    <source>
        <dbReference type="UniProtKB" id="P07371"/>
    </source>
</evidence>
<evidence type="ECO:0000250" key="3">
    <source>
        <dbReference type="UniProtKB" id="P12333"/>
    </source>
</evidence>
<evidence type="ECO:0000255" key="4"/>
<evidence type="ECO:0000305" key="5"/>
<evidence type="ECO:0007829" key="6">
    <source>
        <dbReference type="PDB" id="5ZJI"/>
    </source>
</evidence>
<accession>P12329</accession>
<sequence>MAASTMAISSTAMAGTPIKVGSFGEGRITMRKTVGKPKVAASGSPWYGPDRVKYLGPFSGEPPSYLTGEFPGDYGWDTAGLSADPETFAKNRELEVIHSRWAMLGALGCVFPELLSRNGVKFGEAVWFKAGSQIFSEGGLDYLGNPSLIHAQSILAIWACQVVLMGAVEGYRIAGGPLGEVVDPLYPGGSFDPLGLADDPEAFAELKVKELKNGRLAMFSMFGFFVQAIVTGKGPLENLADHIADPVNNNAWAYATNFVPGN</sequence>
<name>CB21_MAIZE</name>
<protein>
    <recommendedName>
        <fullName>Chlorophyll a-b binding protein 1, chloroplastic</fullName>
    </recommendedName>
    <alternativeName>
        <fullName>LHCII type I CAB-1</fullName>
        <shortName>LHCP</shortName>
    </alternativeName>
</protein>